<gene>
    <name evidence="1" type="primary">folE2</name>
    <name type="ordered locus">XOO2367</name>
</gene>
<feature type="chain" id="PRO_0000147735" description="GTP cyclohydrolase FolE2">
    <location>
        <begin position="1"/>
        <end position="306"/>
    </location>
</feature>
<feature type="site" description="May be catalytically important" evidence="1">
    <location>
        <position position="154"/>
    </location>
</feature>
<evidence type="ECO:0000255" key="1">
    <source>
        <dbReference type="HAMAP-Rule" id="MF_01527"/>
    </source>
</evidence>
<evidence type="ECO:0000305" key="2"/>
<organism>
    <name type="scientific">Xanthomonas oryzae pv. oryzae (strain KACC10331 / KXO85)</name>
    <dbReference type="NCBI Taxonomy" id="291331"/>
    <lineage>
        <taxon>Bacteria</taxon>
        <taxon>Pseudomonadati</taxon>
        <taxon>Pseudomonadota</taxon>
        <taxon>Gammaproteobacteria</taxon>
        <taxon>Lysobacterales</taxon>
        <taxon>Lysobacteraceae</taxon>
        <taxon>Xanthomonas</taxon>
    </lineage>
</organism>
<keyword id="KW-0378">Hydrolase</keyword>
<keyword id="KW-1185">Reference proteome</keyword>
<protein>
    <recommendedName>
        <fullName evidence="1">GTP cyclohydrolase FolE2</fullName>
        <ecNumber evidence="1">3.5.4.16</ecNumber>
    </recommendedName>
</protein>
<comment type="function">
    <text evidence="1">Converts GTP to 7,8-dihydroneopterin triphosphate.</text>
</comment>
<comment type="catalytic activity">
    <reaction evidence="1">
        <text>GTP + H2O = 7,8-dihydroneopterin 3'-triphosphate + formate + H(+)</text>
        <dbReference type="Rhea" id="RHEA:17473"/>
        <dbReference type="ChEBI" id="CHEBI:15377"/>
        <dbReference type="ChEBI" id="CHEBI:15378"/>
        <dbReference type="ChEBI" id="CHEBI:15740"/>
        <dbReference type="ChEBI" id="CHEBI:37565"/>
        <dbReference type="ChEBI" id="CHEBI:58462"/>
        <dbReference type="EC" id="3.5.4.16"/>
    </reaction>
</comment>
<comment type="pathway">
    <text evidence="1">Cofactor biosynthesis; 7,8-dihydroneopterin triphosphate biosynthesis; 7,8-dihydroneopterin triphosphate from GTP: step 1/1.</text>
</comment>
<comment type="similarity">
    <text evidence="1">Belongs to the GTP cyclohydrolase IV family.</text>
</comment>
<comment type="sequence caution" evidence="2">
    <conflict type="erroneous initiation">
        <sequence resource="EMBL-CDS" id="AAW75621"/>
    </conflict>
</comment>
<name>GCH4_XANOR</name>
<sequence>MSATLPDVAVTEAFTLSAPLRWVGMQDIAIPVHLDAASGSGLAARASVQVDLPRAELKGIHMSRLYRLLDLHLQRPLSPAMLPQLLQALIESHADCASRAARLTLSFALMLRMPALRSEGLSGWRAYPVRIAAQCRAGRTTIQLQVEVLYASTCPCSAALSRQLLSDAFVQQHAWCDALPLQDVAQWLQDHGSYATPHSQRSVAQVCVDLPADTQGFAIQELIGLCEQALATPVQAAVRRPDEQAFARLNGANLMYVEDAARRLRKQLAEHYATFHVAVRHLESLHAHDAVAETGSDDETFFPAAL</sequence>
<dbReference type="EC" id="3.5.4.16" evidence="1"/>
<dbReference type="EMBL" id="AE013598">
    <property type="protein sequence ID" value="AAW75621.1"/>
    <property type="status" value="ALT_INIT"/>
    <property type="molecule type" value="Genomic_DNA"/>
</dbReference>
<dbReference type="SMR" id="Q5H0A0"/>
<dbReference type="STRING" id="291331.XOO2367"/>
<dbReference type="KEGG" id="xoo:XOO2367"/>
<dbReference type="PATRIC" id="fig|291331.8.peg.2633"/>
<dbReference type="HOGENOM" id="CLU_062816_0_0_6"/>
<dbReference type="UniPathway" id="UPA00848">
    <property type="reaction ID" value="UER00151"/>
</dbReference>
<dbReference type="Proteomes" id="UP000006735">
    <property type="component" value="Chromosome"/>
</dbReference>
<dbReference type="GO" id="GO:0003934">
    <property type="term" value="F:GTP cyclohydrolase I activity"/>
    <property type="evidence" value="ECO:0007669"/>
    <property type="project" value="UniProtKB-UniRule"/>
</dbReference>
<dbReference type="GO" id="GO:0046654">
    <property type="term" value="P:tetrahydrofolate biosynthetic process"/>
    <property type="evidence" value="ECO:0007669"/>
    <property type="project" value="UniProtKB-UniRule"/>
</dbReference>
<dbReference type="Gene3D" id="3.10.270.10">
    <property type="entry name" value="Urate Oxidase"/>
    <property type="match status" value="1"/>
</dbReference>
<dbReference type="HAMAP" id="MF_01527_B">
    <property type="entry name" value="GTP_cyclohydrol_B"/>
    <property type="match status" value="1"/>
</dbReference>
<dbReference type="InterPro" id="IPR022838">
    <property type="entry name" value="GTP_cyclohydrolase_FolE2"/>
</dbReference>
<dbReference type="InterPro" id="IPR003801">
    <property type="entry name" value="GTP_cyclohydrolase_FolE2/MptA"/>
</dbReference>
<dbReference type="NCBIfam" id="NF010200">
    <property type="entry name" value="PRK13674.1-1"/>
    <property type="match status" value="1"/>
</dbReference>
<dbReference type="PANTHER" id="PTHR36445">
    <property type="entry name" value="GTP CYCLOHYDROLASE MPTA"/>
    <property type="match status" value="1"/>
</dbReference>
<dbReference type="PANTHER" id="PTHR36445:SF1">
    <property type="entry name" value="GTP CYCLOHYDROLASE MPTA"/>
    <property type="match status" value="1"/>
</dbReference>
<dbReference type="Pfam" id="PF02649">
    <property type="entry name" value="GCHY-1"/>
    <property type="match status" value="1"/>
</dbReference>
<reference key="1">
    <citation type="journal article" date="2005" name="Nucleic Acids Res.">
        <title>The genome sequence of Xanthomonas oryzae pathovar oryzae KACC10331, the bacterial blight pathogen of rice.</title>
        <authorList>
            <person name="Lee B.-M."/>
            <person name="Park Y.-J."/>
            <person name="Park D.-S."/>
            <person name="Kang H.-W."/>
            <person name="Kim J.-G."/>
            <person name="Song E.-S."/>
            <person name="Park I.-C."/>
            <person name="Yoon U.-H."/>
            <person name="Hahn J.-H."/>
            <person name="Koo B.-S."/>
            <person name="Lee G.-B."/>
            <person name="Kim H."/>
            <person name="Park H.-S."/>
            <person name="Yoon K.-O."/>
            <person name="Kim J.-H."/>
            <person name="Jung C.-H."/>
            <person name="Koh N.-H."/>
            <person name="Seo J.-S."/>
            <person name="Go S.-J."/>
        </authorList>
    </citation>
    <scope>NUCLEOTIDE SEQUENCE [LARGE SCALE GENOMIC DNA]</scope>
    <source>
        <strain>KACC10331 / KXO85</strain>
    </source>
</reference>
<proteinExistence type="inferred from homology"/>
<accession>Q5H0A0</accession>